<accession>P0DUN9</accession>
<reference key="1">
    <citation type="journal article" date="2018" name="J. Venom. Anim. Toxins Incl. Trop. Dis.">
        <title>Biochemical characterization of a phospholipase A2 homologue from the venom of the social wasp Polybia occidentalis.</title>
        <authorList>
            <person name="Diniz-Sousa R."/>
            <person name="Kayano A.M."/>
            <person name="Caldeira C.A."/>
            <person name="Simoes-Silva R."/>
            <person name="Monteiro M.C."/>
            <person name="Moreira-Dill L.S."/>
            <person name="Grabner F.P."/>
            <person name="Calderon L.A."/>
            <person name="Zuliani J.P."/>
            <person name="Stabeli R.G."/>
            <person name="Soares A.M."/>
        </authorList>
    </citation>
    <scope>PROTEIN SEQUENCE</scope>
    <scope>FUNCTION</scope>
    <scope>MASS SPECTROMETRY</scope>
    <scope>SUBCELLULAR LOCATION</scope>
    <source>
        <tissue>Venom</tissue>
    </source>
</reference>
<dbReference type="SMR" id="P0DUN9"/>
<dbReference type="GO" id="GO:0005576">
    <property type="term" value="C:extracellular region"/>
    <property type="evidence" value="ECO:0007669"/>
    <property type="project" value="UniProtKB-SubCell"/>
</dbReference>
<dbReference type="GO" id="GO:0005509">
    <property type="term" value="F:calcium ion binding"/>
    <property type="evidence" value="ECO:0007669"/>
    <property type="project" value="InterPro"/>
</dbReference>
<dbReference type="GO" id="GO:0047498">
    <property type="term" value="F:calcium-dependent phospholipase A2 activity"/>
    <property type="evidence" value="ECO:0007669"/>
    <property type="project" value="TreeGrafter"/>
</dbReference>
<dbReference type="GO" id="GO:0005543">
    <property type="term" value="F:phospholipid binding"/>
    <property type="evidence" value="ECO:0007669"/>
    <property type="project" value="TreeGrafter"/>
</dbReference>
<dbReference type="GO" id="GO:0090729">
    <property type="term" value="F:toxin activity"/>
    <property type="evidence" value="ECO:0007669"/>
    <property type="project" value="UniProtKB-KW"/>
</dbReference>
<dbReference type="GO" id="GO:0050482">
    <property type="term" value="P:arachidonate secretion"/>
    <property type="evidence" value="ECO:0007669"/>
    <property type="project" value="InterPro"/>
</dbReference>
<dbReference type="GO" id="GO:0016042">
    <property type="term" value="P:lipid catabolic process"/>
    <property type="evidence" value="ECO:0007669"/>
    <property type="project" value="InterPro"/>
</dbReference>
<dbReference type="GO" id="GO:0042130">
    <property type="term" value="P:negative regulation of T cell proliferation"/>
    <property type="evidence" value="ECO:0007669"/>
    <property type="project" value="TreeGrafter"/>
</dbReference>
<dbReference type="GO" id="GO:0006644">
    <property type="term" value="P:phospholipid metabolic process"/>
    <property type="evidence" value="ECO:0007669"/>
    <property type="project" value="InterPro"/>
</dbReference>
<dbReference type="Gene3D" id="1.20.90.10">
    <property type="entry name" value="Phospholipase A2 domain"/>
    <property type="match status" value="1"/>
</dbReference>
<dbReference type="InterPro" id="IPR001211">
    <property type="entry name" value="PLipase_A2"/>
</dbReference>
<dbReference type="InterPro" id="IPR016090">
    <property type="entry name" value="PLipase_A2_dom"/>
</dbReference>
<dbReference type="InterPro" id="IPR036444">
    <property type="entry name" value="PLipase_A2_dom_sf"/>
</dbReference>
<dbReference type="InterPro" id="IPR033113">
    <property type="entry name" value="PLipase_A2_His_AS"/>
</dbReference>
<dbReference type="PANTHER" id="PTHR11716">
    <property type="entry name" value="PHOSPHOLIPASE A2 FAMILY MEMBER"/>
    <property type="match status" value="1"/>
</dbReference>
<dbReference type="PANTHER" id="PTHR11716:SF9">
    <property type="entry name" value="PHOSPHOLIPASE A2, MEMBRANE ASSOCIATED"/>
    <property type="match status" value="1"/>
</dbReference>
<dbReference type="Pfam" id="PF00068">
    <property type="entry name" value="Phospholip_A2_1"/>
    <property type="match status" value="1"/>
</dbReference>
<dbReference type="PRINTS" id="PR00389">
    <property type="entry name" value="PHPHLIPASEA2"/>
</dbReference>
<dbReference type="SMART" id="SM00085">
    <property type="entry name" value="PA2c"/>
    <property type="match status" value="1"/>
</dbReference>
<dbReference type="SUPFAM" id="SSF48619">
    <property type="entry name" value="Phospholipase A2, PLA2"/>
    <property type="match status" value="1"/>
</dbReference>
<dbReference type="PROSITE" id="PS00118">
    <property type="entry name" value="PA2_HIS"/>
    <property type="match status" value="1"/>
</dbReference>
<organism>
    <name type="scientific">Polybia occidentalis</name>
    <name type="common">Paper wasp</name>
    <dbReference type="NCBI Taxonomy" id="91432"/>
    <lineage>
        <taxon>Eukaryota</taxon>
        <taxon>Metazoa</taxon>
        <taxon>Ecdysozoa</taxon>
        <taxon>Arthropoda</taxon>
        <taxon>Hexapoda</taxon>
        <taxon>Insecta</taxon>
        <taxon>Pterygota</taxon>
        <taxon>Neoptera</taxon>
        <taxon>Endopterygota</taxon>
        <taxon>Hymenoptera</taxon>
        <taxon>Apocrita</taxon>
        <taxon>Aculeata</taxon>
        <taxon>Vespoidea</taxon>
        <taxon>Vespidae</taxon>
        <taxon>Polistinae</taxon>
        <taxon>Epiponini</taxon>
        <taxon>Polybia</taxon>
    </lineage>
</organism>
<sequence>SLFELEGKMILQETGKNPAKSYGVYGCNCGVGGRGKPKDATDRCCYVHKCCYKKLTGC</sequence>
<feature type="chain" id="PRO_0000452900" description="Basic phospholipase A2 homolog PocTX" evidence="2">
    <location>
        <begin position="1"/>
        <end position="58" status="greater than"/>
    </location>
</feature>
<feature type="disulfide bond" evidence="1">
    <location>
        <begin position="27"/>
        <end status="unknown"/>
    </location>
</feature>
<feature type="disulfide bond" evidence="1">
    <location>
        <begin position="29"/>
        <end position="45"/>
    </location>
</feature>
<feature type="disulfide bond" evidence="1">
    <location>
        <begin position="44"/>
        <end status="unknown"/>
    </location>
</feature>
<feature type="disulfide bond" evidence="1">
    <location>
        <begin position="50"/>
        <end status="unknown"/>
    </location>
</feature>
<feature type="disulfide bond" evidence="1">
    <location>
        <begin position="51"/>
        <end status="unknown"/>
    </location>
</feature>
<feature type="disulfide bond" evidence="1">
    <location>
        <begin position="58"/>
        <end status="unknown"/>
    </location>
</feature>
<feature type="non-terminal residue" evidence="5">
    <location>
        <position position="58"/>
    </location>
</feature>
<name>PA2H_POLOC</name>
<protein>
    <recommendedName>
        <fullName evidence="3">Basic phospholipase A2 homolog PocTX</fullName>
    </recommendedName>
    <alternativeName>
        <fullName>Lys49 PLA2-like</fullName>
    </alternativeName>
</protein>
<proteinExistence type="evidence at protein level"/>
<comment type="function">
    <text evidence="2">Wasp venom phospholipase A2 homolog that lacks enzymatic activity.</text>
</comment>
<comment type="subcellular location">
    <subcellularLocation>
        <location evidence="2">Secreted</location>
    </subcellularLocation>
</comment>
<comment type="tissue specificity">
    <text evidence="5">Expressed by the venom gland.</text>
</comment>
<comment type="mass spectrometry"/>
<comment type="similarity">
    <text evidence="4">Belongs to the phospholipase A2 family. Group II subfamily. K49 sub-subfamily.</text>
</comment>
<comment type="caution">
    <text evidence="4">Does not bind calcium as one of the calcium-binding sites is lost (Asp-&gt;Lys which corresponds to 'Lys-49' in the current nomenclature).</text>
</comment>
<evidence type="ECO:0000250" key="1">
    <source>
        <dbReference type="UniProtKB" id="P24605"/>
    </source>
</evidence>
<evidence type="ECO:0000269" key="2">
    <source>
    </source>
</evidence>
<evidence type="ECO:0000303" key="3">
    <source>
    </source>
</evidence>
<evidence type="ECO:0000305" key="4"/>
<evidence type="ECO:0000305" key="5">
    <source>
    </source>
</evidence>
<keyword id="KW-0903">Direct protein sequencing</keyword>
<keyword id="KW-1015">Disulfide bond</keyword>
<keyword id="KW-0959">Myotoxin</keyword>
<keyword id="KW-0964">Secreted</keyword>
<keyword id="KW-0800">Toxin</keyword>